<gene>
    <name evidence="1" type="primary">gpsA</name>
    <name type="ordered locus">Pcar_0007</name>
</gene>
<organism>
    <name type="scientific">Syntrophotalea carbinolica (strain DSM 2380 / NBRC 103641 / GraBd1)</name>
    <name type="common">Pelobacter carbinolicus</name>
    <dbReference type="NCBI Taxonomy" id="338963"/>
    <lineage>
        <taxon>Bacteria</taxon>
        <taxon>Pseudomonadati</taxon>
        <taxon>Thermodesulfobacteriota</taxon>
        <taxon>Desulfuromonadia</taxon>
        <taxon>Desulfuromonadales</taxon>
        <taxon>Syntrophotaleaceae</taxon>
        <taxon>Syntrophotalea</taxon>
    </lineage>
</organism>
<accession>Q3A8M2</accession>
<name>GPDA_SYNC1</name>
<keyword id="KW-0963">Cytoplasm</keyword>
<keyword id="KW-0444">Lipid biosynthesis</keyword>
<keyword id="KW-0443">Lipid metabolism</keyword>
<keyword id="KW-0520">NAD</keyword>
<keyword id="KW-0521">NADP</keyword>
<keyword id="KW-0547">Nucleotide-binding</keyword>
<keyword id="KW-0560">Oxidoreductase</keyword>
<keyword id="KW-0594">Phospholipid biosynthesis</keyword>
<keyword id="KW-1208">Phospholipid metabolism</keyword>
<keyword id="KW-1185">Reference proteome</keyword>
<evidence type="ECO:0000255" key="1">
    <source>
        <dbReference type="HAMAP-Rule" id="MF_00394"/>
    </source>
</evidence>
<feature type="chain" id="PRO_0000255341" description="Glycerol-3-phosphate dehydrogenase [NAD(P)+]">
    <location>
        <begin position="1"/>
        <end position="333"/>
    </location>
</feature>
<feature type="active site" description="Proton acceptor" evidence="1">
    <location>
        <position position="191"/>
    </location>
</feature>
<feature type="binding site" evidence="1">
    <location>
        <position position="10"/>
    </location>
    <ligand>
        <name>NADPH</name>
        <dbReference type="ChEBI" id="CHEBI:57783"/>
    </ligand>
</feature>
<feature type="binding site" evidence="1">
    <location>
        <position position="11"/>
    </location>
    <ligand>
        <name>NADPH</name>
        <dbReference type="ChEBI" id="CHEBI:57783"/>
    </ligand>
</feature>
<feature type="binding site" evidence="1">
    <location>
        <position position="105"/>
    </location>
    <ligand>
        <name>NADPH</name>
        <dbReference type="ChEBI" id="CHEBI:57783"/>
    </ligand>
</feature>
<feature type="binding site" evidence="1">
    <location>
        <position position="105"/>
    </location>
    <ligand>
        <name>sn-glycerol 3-phosphate</name>
        <dbReference type="ChEBI" id="CHEBI:57597"/>
    </ligand>
</feature>
<feature type="binding site" evidence="1">
    <location>
        <position position="136"/>
    </location>
    <ligand>
        <name>sn-glycerol 3-phosphate</name>
        <dbReference type="ChEBI" id="CHEBI:57597"/>
    </ligand>
</feature>
<feature type="binding site" evidence="1">
    <location>
        <position position="138"/>
    </location>
    <ligand>
        <name>sn-glycerol 3-phosphate</name>
        <dbReference type="ChEBI" id="CHEBI:57597"/>
    </ligand>
</feature>
<feature type="binding site" evidence="1">
    <location>
        <position position="140"/>
    </location>
    <ligand>
        <name>NADPH</name>
        <dbReference type="ChEBI" id="CHEBI:57783"/>
    </ligand>
</feature>
<feature type="binding site" evidence="1">
    <location>
        <position position="191"/>
    </location>
    <ligand>
        <name>sn-glycerol 3-phosphate</name>
        <dbReference type="ChEBI" id="CHEBI:57597"/>
    </ligand>
</feature>
<feature type="binding site" evidence="1">
    <location>
        <position position="244"/>
    </location>
    <ligand>
        <name>sn-glycerol 3-phosphate</name>
        <dbReference type="ChEBI" id="CHEBI:57597"/>
    </ligand>
</feature>
<feature type="binding site" evidence="1">
    <location>
        <position position="254"/>
    </location>
    <ligand>
        <name>sn-glycerol 3-phosphate</name>
        <dbReference type="ChEBI" id="CHEBI:57597"/>
    </ligand>
</feature>
<feature type="binding site" evidence="1">
    <location>
        <position position="255"/>
    </location>
    <ligand>
        <name>NADPH</name>
        <dbReference type="ChEBI" id="CHEBI:57783"/>
    </ligand>
</feature>
<feature type="binding site" evidence="1">
    <location>
        <position position="255"/>
    </location>
    <ligand>
        <name>sn-glycerol 3-phosphate</name>
        <dbReference type="ChEBI" id="CHEBI:57597"/>
    </ligand>
</feature>
<feature type="binding site" evidence="1">
    <location>
        <position position="256"/>
    </location>
    <ligand>
        <name>sn-glycerol 3-phosphate</name>
        <dbReference type="ChEBI" id="CHEBI:57597"/>
    </ligand>
</feature>
<feature type="binding site" evidence="1">
    <location>
        <position position="279"/>
    </location>
    <ligand>
        <name>NADPH</name>
        <dbReference type="ChEBI" id="CHEBI:57783"/>
    </ligand>
</feature>
<feature type="binding site" evidence="1">
    <location>
        <position position="281"/>
    </location>
    <ligand>
        <name>NADPH</name>
        <dbReference type="ChEBI" id="CHEBI:57783"/>
    </ligand>
</feature>
<sequence length="333" mass="36186">MNIGVIGAGSWGTTLADLLSKNGHAVTLWAYEQDLVERMRKSAKNDLYLPDFTLHEKLAYSSDLGEVAAGKDMVVLVAPSQVLRAVVRQAEPHLAKDTILVSAAKGIENDTLMPMSEVLKEVLPEERLQRAAYLSGPTFAREVAAEIPTALTVASEDENIARTVQKIFSCEYFRVYRSSDIVGVELGGALKNVIALAAGISDGLGYGYNARAALITRGLAEMTRIGVAMVARERTFMGLSGMGDLVLTCTGDLSRNRSVGLELGRGRKLEDILSGMRMVAEGVKTTLSAYQLAKRLGVETPIIEQMYLILFENKDPRDAVADLMQRSLKAEMD</sequence>
<proteinExistence type="inferred from homology"/>
<reference key="1">
    <citation type="submission" date="2005-10" db="EMBL/GenBank/DDBJ databases">
        <title>Complete sequence of Pelobacter carbinolicus DSM 2380.</title>
        <authorList>
            <person name="Copeland A."/>
            <person name="Lucas S."/>
            <person name="Lapidus A."/>
            <person name="Barry K."/>
            <person name="Detter J.C."/>
            <person name="Glavina T."/>
            <person name="Hammon N."/>
            <person name="Israni S."/>
            <person name="Pitluck S."/>
            <person name="Chertkov O."/>
            <person name="Schmutz J."/>
            <person name="Larimer F."/>
            <person name="Land M."/>
            <person name="Kyrpides N."/>
            <person name="Ivanova N."/>
            <person name="Richardson P."/>
        </authorList>
    </citation>
    <scope>NUCLEOTIDE SEQUENCE [LARGE SCALE GENOMIC DNA]</scope>
    <source>
        <strain>DSM 2380 / NBRC 103641 / GraBd1</strain>
    </source>
</reference>
<dbReference type="EC" id="1.1.1.94" evidence="1"/>
<dbReference type="EMBL" id="CP000142">
    <property type="protein sequence ID" value="ABA87270.1"/>
    <property type="molecule type" value="Genomic_DNA"/>
</dbReference>
<dbReference type="RefSeq" id="WP_011339652.1">
    <property type="nucleotide sequence ID" value="NC_007498.2"/>
</dbReference>
<dbReference type="SMR" id="Q3A8M2"/>
<dbReference type="STRING" id="338963.Pcar_0007"/>
<dbReference type="KEGG" id="pca:Pcar_0007"/>
<dbReference type="eggNOG" id="COG0240">
    <property type="taxonomic scope" value="Bacteria"/>
</dbReference>
<dbReference type="HOGENOM" id="CLU_033449_0_2_7"/>
<dbReference type="OrthoDB" id="9812273at2"/>
<dbReference type="UniPathway" id="UPA00940"/>
<dbReference type="Proteomes" id="UP000002534">
    <property type="component" value="Chromosome"/>
</dbReference>
<dbReference type="GO" id="GO:0005829">
    <property type="term" value="C:cytosol"/>
    <property type="evidence" value="ECO:0007669"/>
    <property type="project" value="TreeGrafter"/>
</dbReference>
<dbReference type="GO" id="GO:0047952">
    <property type="term" value="F:glycerol-3-phosphate dehydrogenase [NAD(P)+] activity"/>
    <property type="evidence" value="ECO:0007669"/>
    <property type="project" value="UniProtKB-UniRule"/>
</dbReference>
<dbReference type="GO" id="GO:0051287">
    <property type="term" value="F:NAD binding"/>
    <property type="evidence" value="ECO:0007669"/>
    <property type="project" value="InterPro"/>
</dbReference>
<dbReference type="GO" id="GO:0005975">
    <property type="term" value="P:carbohydrate metabolic process"/>
    <property type="evidence" value="ECO:0007669"/>
    <property type="project" value="InterPro"/>
</dbReference>
<dbReference type="GO" id="GO:0046167">
    <property type="term" value="P:glycerol-3-phosphate biosynthetic process"/>
    <property type="evidence" value="ECO:0007669"/>
    <property type="project" value="UniProtKB-UniRule"/>
</dbReference>
<dbReference type="GO" id="GO:0046168">
    <property type="term" value="P:glycerol-3-phosphate catabolic process"/>
    <property type="evidence" value="ECO:0007669"/>
    <property type="project" value="InterPro"/>
</dbReference>
<dbReference type="GO" id="GO:0006650">
    <property type="term" value="P:glycerophospholipid metabolic process"/>
    <property type="evidence" value="ECO:0007669"/>
    <property type="project" value="UniProtKB-UniRule"/>
</dbReference>
<dbReference type="GO" id="GO:0008654">
    <property type="term" value="P:phospholipid biosynthetic process"/>
    <property type="evidence" value="ECO:0007669"/>
    <property type="project" value="UniProtKB-KW"/>
</dbReference>
<dbReference type="FunFam" id="1.10.1040.10:FF:000001">
    <property type="entry name" value="Glycerol-3-phosphate dehydrogenase [NAD(P)+]"/>
    <property type="match status" value="1"/>
</dbReference>
<dbReference type="FunFam" id="3.40.50.720:FF:000019">
    <property type="entry name" value="Glycerol-3-phosphate dehydrogenase [NAD(P)+]"/>
    <property type="match status" value="1"/>
</dbReference>
<dbReference type="Gene3D" id="1.10.1040.10">
    <property type="entry name" value="N-(1-d-carboxylethyl)-l-norvaline Dehydrogenase, domain 2"/>
    <property type="match status" value="1"/>
</dbReference>
<dbReference type="Gene3D" id="3.40.50.720">
    <property type="entry name" value="NAD(P)-binding Rossmann-like Domain"/>
    <property type="match status" value="1"/>
</dbReference>
<dbReference type="HAMAP" id="MF_00394">
    <property type="entry name" value="NAD_Glyc3P_dehydrog"/>
    <property type="match status" value="1"/>
</dbReference>
<dbReference type="InterPro" id="IPR008927">
    <property type="entry name" value="6-PGluconate_DH-like_C_sf"/>
</dbReference>
<dbReference type="InterPro" id="IPR013328">
    <property type="entry name" value="6PGD_dom2"/>
</dbReference>
<dbReference type="InterPro" id="IPR006168">
    <property type="entry name" value="G3P_DH_NAD-dep"/>
</dbReference>
<dbReference type="InterPro" id="IPR006109">
    <property type="entry name" value="G3P_DH_NAD-dep_C"/>
</dbReference>
<dbReference type="InterPro" id="IPR011128">
    <property type="entry name" value="G3P_DH_NAD-dep_N"/>
</dbReference>
<dbReference type="InterPro" id="IPR036291">
    <property type="entry name" value="NAD(P)-bd_dom_sf"/>
</dbReference>
<dbReference type="NCBIfam" id="NF000940">
    <property type="entry name" value="PRK00094.1-2"/>
    <property type="match status" value="1"/>
</dbReference>
<dbReference type="NCBIfam" id="NF000942">
    <property type="entry name" value="PRK00094.1-4"/>
    <property type="match status" value="1"/>
</dbReference>
<dbReference type="PANTHER" id="PTHR11728">
    <property type="entry name" value="GLYCEROL-3-PHOSPHATE DEHYDROGENASE"/>
    <property type="match status" value="1"/>
</dbReference>
<dbReference type="PANTHER" id="PTHR11728:SF1">
    <property type="entry name" value="GLYCEROL-3-PHOSPHATE DEHYDROGENASE [NAD(+)] 2, CHLOROPLASTIC"/>
    <property type="match status" value="1"/>
</dbReference>
<dbReference type="Pfam" id="PF07479">
    <property type="entry name" value="NAD_Gly3P_dh_C"/>
    <property type="match status" value="1"/>
</dbReference>
<dbReference type="Pfam" id="PF01210">
    <property type="entry name" value="NAD_Gly3P_dh_N"/>
    <property type="match status" value="1"/>
</dbReference>
<dbReference type="PIRSF" id="PIRSF000114">
    <property type="entry name" value="Glycerol-3-P_dh"/>
    <property type="match status" value="1"/>
</dbReference>
<dbReference type="PRINTS" id="PR00077">
    <property type="entry name" value="GPDHDRGNASE"/>
</dbReference>
<dbReference type="SUPFAM" id="SSF48179">
    <property type="entry name" value="6-phosphogluconate dehydrogenase C-terminal domain-like"/>
    <property type="match status" value="1"/>
</dbReference>
<dbReference type="SUPFAM" id="SSF51735">
    <property type="entry name" value="NAD(P)-binding Rossmann-fold domains"/>
    <property type="match status" value="1"/>
</dbReference>
<dbReference type="PROSITE" id="PS00957">
    <property type="entry name" value="NAD_G3PDH"/>
    <property type="match status" value="1"/>
</dbReference>
<comment type="function">
    <text evidence="1">Catalyzes the reduction of the glycolytic intermediate dihydroxyacetone phosphate (DHAP) to sn-glycerol 3-phosphate (G3P), the key precursor for phospholipid synthesis.</text>
</comment>
<comment type="catalytic activity">
    <reaction evidence="1">
        <text>sn-glycerol 3-phosphate + NAD(+) = dihydroxyacetone phosphate + NADH + H(+)</text>
        <dbReference type="Rhea" id="RHEA:11092"/>
        <dbReference type="ChEBI" id="CHEBI:15378"/>
        <dbReference type="ChEBI" id="CHEBI:57540"/>
        <dbReference type="ChEBI" id="CHEBI:57597"/>
        <dbReference type="ChEBI" id="CHEBI:57642"/>
        <dbReference type="ChEBI" id="CHEBI:57945"/>
        <dbReference type="EC" id="1.1.1.94"/>
    </reaction>
    <physiologicalReaction direction="right-to-left" evidence="1">
        <dbReference type="Rhea" id="RHEA:11094"/>
    </physiologicalReaction>
</comment>
<comment type="catalytic activity">
    <reaction evidence="1">
        <text>sn-glycerol 3-phosphate + NADP(+) = dihydroxyacetone phosphate + NADPH + H(+)</text>
        <dbReference type="Rhea" id="RHEA:11096"/>
        <dbReference type="ChEBI" id="CHEBI:15378"/>
        <dbReference type="ChEBI" id="CHEBI:57597"/>
        <dbReference type="ChEBI" id="CHEBI:57642"/>
        <dbReference type="ChEBI" id="CHEBI:57783"/>
        <dbReference type="ChEBI" id="CHEBI:58349"/>
        <dbReference type="EC" id="1.1.1.94"/>
    </reaction>
    <physiologicalReaction direction="right-to-left" evidence="1">
        <dbReference type="Rhea" id="RHEA:11098"/>
    </physiologicalReaction>
</comment>
<comment type="pathway">
    <text evidence="1">Membrane lipid metabolism; glycerophospholipid metabolism.</text>
</comment>
<comment type="subcellular location">
    <subcellularLocation>
        <location evidence="1">Cytoplasm</location>
    </subcellularLocation>
</comment>
<comment type="similarity">
    <text evidence="1">Belongs to the NAD-dependent glycerol-3-phosphate dehydrogenase family.</text>
</comment>
<protein>
    <recommendedName>
        <fullName evidence="1">Glycerol-3-phosphate dehydrogenase [NAD(P)+]</fullName>
        <ecNumber evidence="1">1.1.1.94</ecNumber>
    </recommendedName>
    <alternativeName>
        <fullName evidence="1">NAD(P)(+)-dependent glycerol-3-phosphate dehydrogenase</fullName>
    </alternativeName>
    <alternativeName>
        <fullName evidence="1">NAD(P)H-dependent dihydroxyacetone-phosphate reductase</fullName>
    </alternativeName>
</protein>